<comment type="function">
    <text evidence="1">Binds 16S rRNA, required for the assembly of 30S particles and may also be responsible for determining the conformation of the 16S rRNA at the A site.</text>
</comment>
<comment type="subunit">
    <text evidence="1">Part of the 30S ribosomal subunit. Contacts proteins S3 and S10.</text>
</comment>
<comment type="similarity">
    <text evidence="1">Belongs to the universal ribosomal protein uS14 family.</text>
</comment>
<keyword id="KW-0687">Ribonucleoprotein</keyword>
<keyword id="KW-0689">Ribosomal protein</keyword>
<keyword id="KW-0694">RNA-binding</keyword>
<keyword id="KW-0699">rRNA-binding</keyword>
<organism>
    <name type="scientific">Xanthomonas oryzae pv. oryzae (strain PXO99A)</name>
    <dbReference type="NCBI Taxonomy" id="360094"/>
    <lineage>
        <taxon>Bacteria</taxon>
        <taxon>Pseudomonadati</taxon>
        <taxon>Pseudomonadota</taxon>
        <taxon>Gammaproteobacteria</taxon>
        <taxon>Lysobacterales</taxon>
        <taxon>Lysobacteraceae</taxon>
        <taxon>Xanthomonas</taxon>
    </lineage>
</organism>
<sequence length="101" mass="11499">MAKTSMIHRDIKRAKLAKKFAGKRDALKKILSSQDASYEEKIDASTKLQKLPRDSSPSRHRNRCELSGRPRGVYRKFGLGRNMLRKATMNGDVPGLRKASW</sequence>
<proteinExistence type="inferred from homology"/>
<protein>
    <recommendedName>
        <fullName evidence="1">Small ribosomal subunit protein uS14</fullName>
    </recommendedName>
    <alternativeName>
        <fullName evidence="3">30S ribosomal protein S14</fullName>
    </alternativeName>
</protein>
<evidence type="ECO:0000255" key="1">
    <source>
        <dbReference type="HAMAP-Rule" id="MF_00537"/>
    </source>
</evidence>
<evidence type="ECO:0000256" key="2">
    <source>
        <dbReference type="SAM" id="MobiDB-lite"/>
    </source>
</evidence>
<evidence type="ECO:0000305" key="3"/>
<gene>
    <name evidence="1" type="primary">rpsN</name>
    <name type="ordered locus">PXO_04508</name>
</gene>
<name>RS14_XANOP</name>
<dbReference type="EMBL" id="CP000967">
    <property type="protein sequence ID" value="ACD57900.1"/>
    <property type="molecule type" value="Genomic_DNA"/>
</dbReference>
<dbReference type="RefSeq" id="WP_005917137.1">
    <property type="nucleotide sequence ID" value="NC_010717.2"/>
</dbReference>
<dbReference type="SMR" id="B2SQS3"/>
<dbReference type="GeneID" id="97210517"/>
<dbReference type="KEGG" id="xop:PXO_04508"/>
<dbReference type="eggNOG" id="COG0199">
    <property type="taxonomic scope" value="Bacteria"/>
</dbReference>
<dbReference type="HOGENOM" id="CLU_139869_0_1_6"/>
<dbReference type="Proteomes" id="UP000001740">
    <property type="component" value="Chromosome"/>
</dbReference>
<dbReference type="GO" id="GO:0005737">
    <property type="term" value="C:cytoplasm"/>
    <property type="evidence" value="ECO:0007669"/>
    <property type="project" value="UniProtKB-ARBA"/>
</dbReference>
<dbReference type="GO" id="GO:0015935">
    <property type="term" value="C:small ribosomal subunit"/>
    <property type="evidence" value="ECO:0007669"/>
    <property type="project" value="TreeGrafter"/>
</dbReference>
<dbReference type="GO" id="GO:0019843">
    <property type="term" value="F:rRNA binding"/>
    <property type="evidence" value="ECO:0007669"/>
    <property type="project" value="UniProtKB-UniRule"/>
</dbReference>
<dbReference type="GO" id="GO:0003735">
    <property type="term" value="F:structural constituent of ribosome"/>
    <property type="evidence" value="ECO:0007669"/>
    <property type="project" value="InterPro"/>
</dbReference>
<dbReference type="GO" id="GO:0006412">
    <property type="term" value="P:translation"/>
    <property type="evidence" value="ECO:0007669"/>
    <property type="project" value="UniProtKB-UniRule"/>
</dbReference>
<dbReference type="FunFam" id="1.10.287.1480:FF:000001">
    <property type="entry name" value="30S ribosomal protein S14"/>
    <property type="match status" value="1"/>
</dbReference>
<dbReference type="Gene3D" id="1.10.287.1480">
    <property type="match status" value="1"/>
</dbReference>
<dbReference type="HAMAP" id="MF_00537">
    <property type="entry name" value="Ribosomal_uS14_1"/>
    <property type="match status" value="1"/>
</dbReference>
<dbReference type="InterPro" id="IPR001209">
    <property type="entry name" value="Ribosomal_uS14"/>
</dbReference>
<dbReference type="InterPro" id="IPR023036">
    <property type="entry name" value="Ribosomal_uS14_bac/plastid"/>
</dbReference>
<dbReference type="NCBIfam" id="NF006477">
    <property type="entry name" value="PRK08881.1"/>
    <property type="match status" value="1"/>
</dbReference>
<dbReference type="PANTHER" id="PTHR19836">
    <property type="entry name" value="30S RIBOSOMAL PROTEIN S14"/>
    <property type="match status" value="1"/>
</dbReference>
<dbReference type="PANTHER" id="PTHR19836:SF19">
    <property type="entry name" value="SMALL RIBOSOMAL SUBUNIT PROTEIN US14M"/>
    <property type="match status" value="1"/>
</dbReference>
<dbReference type="Pfam" id="PF00253">
    <property type="entry name" value="Ribosomal_S14"/>
    <property type="match status" value="1"/>
</dbReference>
<dbReference type="SUPFAM" id="SSF57716">
    <property type="entry name" value="Glucocorticoid receptor-like (DNA-binding domain)"/>
    <property type="match status" value="1"/>
</dbReference>
<accession>B2SQS3</accession>
<feature type="chain" id="PRO_1000128644" description="Small ribosomal subunit protein uS14">
    <location>
        <begin position="1"/>
        <end position="101"/>
    </location>
</feature>
<feature type="region of interest" description="Disordered" evidence="2">
    <location>
        <begin position="33"/>
        <end position="69"/>
    </location>
</feature>
<feature type="compositionally biased region" description="Basic and acidic residues" evidence="2">
    <location>
        <begin position="51"/>
        <end position="68"/>
    </location>
</feature>
<reference key="1">
    <citation type="journal article" date="2008" name="BMC Genomics">
        <title>Genome sequence and rapid evolution of the rice pathogen Xanthomonas oryzae pv. oryzae PXO99A.</title>
        <authorList>
            <person name="Salzberg S.L."/>
            <person name="Sommer D.D."/>
            <person name="Schatz M.C."/>
            <person name="Phillippy A.M."/>
            <person name="Rabinowicz P.D."/>
            <person name="Tsuge S."/>
            <person name="Furutani A."/>
            <person name="Ochiai H."/>
            <person name="Delcher A.L."/>
            <person name="Kelley D."/>
            <person name="Madupu R."/>
            <person name="Puiu D."/>
            <person name="Radune D."/>
            <person name="Shumway M."/>
            <person name="Trapnell C."/>
            <person name="Aparna G."/>
            <person name="Jha G."/>
            <person name="Pandey A."/>
            <person name="Patil P.B."/>
            <person name="Ishihara H."/>
            <person name="Meyer D.F."/>
            <person name="Szurek B."/>
            <person name="Verdier V."/>
            <person name="Koebnik R."/>
            <person name="Dow J.M."/>
            <person name="Ryan R.P."/>
            <person name="Hirata H."/>
            <person name="Tsuyumu S."/>
            <person name="Won Lee S."/>
            <person name="Seo Y.-S."/>
            <person name="Sriariyanum M."/>
            <person name="Ronald P.C."/>
            <person name="Sonti R.V."/>
            <person name="Van Sluys M.-A."/>
            <person name="Leach J.E."/>
            <person name="White F.F."/>
            <person name="Bogdanove A.J."/>
        </authorList>
    </citation>
    <scope>NUCLEOTIDE SEQUENCE [LARGE SCALE GENOMIC DNA]</scope>
    <source>
        <strain>PXO99A</strain>
    </source>
</reference>